<protein>
    <recommendedName>
        <fullName evidence="1">Decarboxylase</fullName>
        <ecNumber evidence="1">4.1.1.-</ecNumber>
    </recommendedName>
    <alternativeName>
        <fullName evidence="7">Monodictyphenone synthesis protein H-1</fullName>
    </alternativeName>
</protein>
<organism>
    <name type="scientific">Emericella nidulans (strain FGSC A4 / ATCC 38163 / CBS 112.46 / NRRL 194 / M139)</name>
    <name type="common">Aspergillus nidulans</name>
    <dbReference type="NCBI Taxonomy" id="227321"/>
    <lineage>
        <taxon>Eukaryota</taxon>
        <taxon>Fungi</taxon>
        <taxon>Dikarya</taxon>
        <taxon>Ascomycota</taxon>
        <taxon>Pezizomycotina</taxon>
        <taxon>Eurotiomycetes</taxon>
        <taxon>Eurotiomycetidae</taxon>
        <taxon>Eurotiales</taxon>
        <taxon>Aspergillaceae</taxon>
        <taxon>Aspergillus</taxon>
        <taxon>Aspergillus subgen. Nidulantes</taxon>
    </lineage>
</organism>
<sequence>MSTPNPPATNSTTSEDRLLCLTILGYRKQGMSEEAYRKHMIEHSAPLTKDLMIKYGILRWTVKCPDRSKIHNPTETRELMYEIMDPQMANIADYDCFSQVVFRNFEDYKKIKDDPWYKEHLVGDHENFADTKRSKMTIGWITQFIDRGVVTEGFEGFPGPK</sequence>
<keyword id="KW-0456">Lyase</keyword>
<keyword id="KW-1185">Reference proteome</keyword>
<feature type="chain" id="PRO_0000437097" description="Decarboxylase">
    <location>
        <begin position="1"/>
        <end position="161"/>
    </location>
</feature>
<feature type="domain" description="EthD" evidence="3">
    <location>
        <begin position="29"/>
        <end position="131"/>
    </location>
</feature>
<gene>
    <name evidence="7" type="primary">mdpH-1</name>
    <name type="ORF">ANIA_10022</name>
</gene>
<evidence type="ECO:0000250" key="1">
    <source>
        <dbReference type="UniProtKB" id="P0DOB3"/>
    </source>
</evidence>
<evidence type="ECO:0000250" key="2">
    <source>
        <dbReference type="UniProtKB" id="Q0CCY3"/>
    </source>
</evidence>
<evidence type="ECO:0000255" key="3"/>
<evidence type="ECO:0000269" key="4">
    <source>
    </source>
</evidence>
<evidence type="ECO:0000269" key="5">
    <source>
    </source>
</evidence>
<evidence type="ECO:0000269" key="6">
    <source>
    </source>
</evidence>
<evidence type="ECO:0000303" key="7">
    <source>
    </source>
</evidence>
<evidence type="ECO:0000305" key="8"/>
<reference key="1">
    <citation type="journal article" date="2005" name="Nature">
        <title>Sequencing of Aspergillus nidulans and comparative analysis with A. fumigatus and A. oryzae.</title>
        <authorList>
            <person name="Galagan J.E."/>
            <person name="Calvo S.E."/>
            <person name="Cuomo C."/>
            <person name="Ma L.-J."/>
            <person name="Wortman J.R."/>
            <person name="Batzoglou S."/>
            <person name="Lee S.-I."/>
            <person name="Bastuerkmen M."/>
            <person name="Spevak C.C."/>
            <person name="Clutterbuck J."/>
            <person name="Kapitonov V."/>
            <person name="Jurka J."/>
            <person name="Scazzocchio C."/>
            <person name="Farman M.L."/>
            <person name="Butler J."/>
            <person name="Purcell S."/>
            <person name="Harris S."/>
            <person name="Braus G.H."/>
            <person name="Draht O."/>
            <person name="Busch S."/>
            <person name="D'Enfert C."/>
            <person name="Bouchier C."/>
            <person name="Goldman G.H."/>
            <person name="Bell-Pedersen D."/>
            <person name="Griffiths-Jones S."/>
            <person name="Doonan J.H."/>
            <person name="Yu J."/>
            <person name="Vienken K."/>
            <person name="Pain A."/>
            <person name="Freitag M."/>
            <person name="Selker E.U."/>
            <person name="Archer D.B."/>
            <person name="Penalva M.A."/>
            <person name="Oakley B.R."/>
            <person name="Momany M."/>
            <person name="Tanaka T."/>
            <person name="Kumagai T."/>
            <person name="Asai K."/>
            <person name="Machida M."/>
            <person name="Nierman W.C."/>
            <person name="Denning D.W."/>
            <person name="Caddick M.X."/>
            <person name="Hynes M."/>
            <person name="Paoletti M."/>
            <person name="Fischer R."/>
            <person name="Miller B.L."/>
            <person name="Dyer P.S."/>
            <person name="Sachs M.S."/>
            <person name="Osmani S.A."/>
            <person name="Birren B.W."/>
        </authorList>
    </citation>
    <scope>NUCLEOTIDE SEQUENCE [LARGE SCALE GENOMIC DNA]</scope>
    <source>
        <strain>FGSC A4 / ATCC 38163 / CBS 112.46 / NRRL 194 / M139</strain>
    </source>
</reference>
<reference key="2">
    <citation type="journal article" date="2009" name="Fungal Genet. Biol.">
        <title>The 2008 update of the Aspergillus nidulans genome annotation: a community effort.</title>
        <authorList>
            <person name="Wortman J.R."/>
            <person name="Gilsenan J.M."/>
            <person name="Joardar V."/>
            <person name="Deegan J."/>
            <person name="Clutterbuck J."/>
            <person name="Andersen M.R."/>
            <person name="Archer D."/>
            <person name="Bencina M."/>
            <person name="Braus G."/>
            <person name="Coutinho P."/>
            <person name="von Dohren H."/>
            <person name="Doonan J."/>
            <person name="Driessen A.J."/>
            <person name="Durek P."/>
            <person name="Espeso E."/>
            <person name="Fekete E."/>
            <person name="Flipphi M."/>
            <person name="Estrada C.G."/>
            <person name="Geysens S."/>
            <person name="Goldman G."/>
            <person name="de Groot P.W."/>
            <person name="Hansen K."/>
            <person name="Harris S.D."/>
            <person name="Heinekamp T."/>
            <person name="Helmstaedt K."/>
            <person name="Henrissat B."/>
            <person name="Hofmann G."/>
            <person name="Homan T."/>
            <person name="Horio T."/>
            <person name="Horiuchi H."/>
            <person name="James S."/>
            <person name="Jones M."/>
            <person name="Karaffa L."/>
            <person name="Karanyi Z."/>
            <person name="Kato M."/>
            <person name="Keller N."/>
            <person name="Kelly D.E."/>
            <person name="Kiel J.A."/>
            <person name="Kim J.M."/>
            <person name="van der Klei I.J."/>
            <person name="Klis F.M."/>
            <person name="Kovalchuk A."/>
            <person name="Krasevec N."/>
            <person name="Kubicek C.P."/>
            <person name="Liu B."/>
            <person name="Maccabe A."/>
            <person name="Meyer V."/>
            <person name="Mirabito P."/>
            <person name="Miskei M."/>
            <person name="Mos M."/>
            <person name="Mullins J."/>
            <person name="Nelson D.R."/>
            <person name="Nielsen J."/>
            <person name="Oakley B.R."/>
            <person name="Osmani S.A."/>
            <person name="Pakula T."/>
            <person name="Paszewski A."/>
            <person name="Paulsen I."/>
            <person name="Pilsyk S."/>
            <person name="Pocsi I."/>
            <person name="Punt P.J."/>
            <person name="Ram A.F."/>
            <person name="Ren Q."/>
            <person name="Robellet X."/>
            <person name="Robson G."/>
            <person name="Seiboth B."/>
            <person name="van Solingen P."/>
            <person name="Specht T."/>
            <person name="Sun J."/>
            <person name="Taheri-Talesh N."/>
            <person name="Takeshita N."/>
            <person name="Ussery D."/>
            <person name="vanKuyk P.A."/>
            <person name="Visser H."/>
            <person name="van de Vondervoort P.J."/>
            <person name="de Vries R.P."/>
            <person name="Walton J."/>
            <person name="Xiang X."/>
            <person name="Xiong Y."/>
            <person name="Zeng A.P."/>
            <person name="Brandt B.W."/>
            <person name="Cornell M.J."/>
            <person name="van den Hondel C.A."/>
            <person name="Visser J."/>
            <person name="Oliver S.G."/>
            <person name="Turner G."/>
        </authorList>
    </citation>
    <scope>GENOME REANNOTATION</scope>
    <source>
        <strain>FGSC A4 / ATCC 38163 / CBS 112.46 / NRRL 194 / M139</strain>
    </source>
</reference>
<reference key="3">
    <citation type="journal article" date="2010" name="Appl. Environ. Microbiol.">
        <title>Characterization of the Aspergillus nidulans monodictyphenone gene cluster.</title>
        <authorList>
            <person name="Chiang Y.M."/>
            <person name="Szewczyk E."/>
            <person name="Davidson A.D."/>
            <person name="Entwistle R."/>
            <person name="Keller N.P."/>
            <person name="Wang C.C."/>
            <person name="Oakley B.R."/>
        </authorList>
    </citation>
    <scope>FUNCTION</scope>
    <scope>DISRUPTION PHENOTYPE</scope>
    <scope>PATHWAY</scope>
</reference>
<reference key="4">
    <citation type="journal article" date="2011" name="J. Am. Chem. Soc.">
        <title>Genome-based deletion analysis reveals the prenyl xanthone biosynthesis pathway in Aspergillus nidulans.</title>
        <authorList>
            <person name="Sanchez J.F."/>
            <person name="Entwistle R."/>
            <person name="Hung J.H."/>
            <person name="Yaegashi J."/>
            <person name="Jain S."/>
            <person name="Chiang Y.M."/>
            <person name="Wang C.C."/>
            <person name="Oakley B.R."/>
        </authorList>
    </citation>
    <scope>FUNCTION</scope>
    <scope>DISRUPTION PHENOTYPE</scope>
    <scope>PATHWAY</scope>
</reference>
<reference key="5">
    <citation type="journal article" date="2012" name="ChemBioChem">
        <title>Genetic and biosynthetic studies of the fungal prenylated xanthone shamixanthone and related metabolites in Aspergillus spp. revisited.</title>
        <authorList>
            <person name="Simpson T.J."/>
        </authorList>
    </citation>
    <scope>FUNCTION</scope>
</reference>
<reference key="6">
    <citation type="journal article" date="2012" name="J. Am. Chem. Soc.">
        <title>Tautomers of anthrahydroquinones: enzymatic reduction and implications for chrysophanol, monodictyphenone, and related xanthone biosyntheses.</title>
        <authorList>
            <person name="Schaetzle M.A."/>
            <person name="Husain S.M."/>
            <person name="Ferlaino S."/>
            <person name="Mueller M."/>
        </authorList>
    </citation>
    <scope>FUNCTION</scope>
</reference>
<reference key="7">
    <citation type="journal article" date="2015" name="J. Am. Chem. Soc.">
        <title>New insights into the conversion of versicolorin A in the biosynthesis of aflatoxin B1.</title>
        <authorList>
            <person name="Conradt D."/>
            <person name="Schaetzle M.A."/>
            <person name="Haas J."/>
            <person name="Townsend C.A."/>
            <person name="Mueller M."/>
        </authorList>
    </citation>
    <scope>FUNCTION</scope>
</reference>
<dbReference type="EC" id="4.1.1.-" evidence="1"/>
<dbReference type="EMBL" id="BN001308">
    <property type="protein sequence ID" value="CBF90095.1"/>
    <property type="status" value="ALT_SEQ"/>
    <property type="molecule type" value="Genomic_DNA"/>
</dbReference>
<dbReference type="EMBL" id="AACD01000005">
    <property type="protein sequence ID" value="EAA66024.1"/>
    <property type="status" value="ALT_SEQ"/>
    <property type="molecule type" value="Genomic_DNA"/>
</dbReference>
<dbReference type="InParanoid" id="P9WEV8"/>
<dbReference type="OrthoDB" id="3454835at2759"/>
<dbReference type="Proteomes" id="UP000000560">
    <property type="component" value="Chromosome VIII"/>
</dbReference>
<dbReference type="GO" id="GO:0016829">
    <property type="term" value="F:lyase activity"/>
    <property type="evidence" value="ECO:0007669"/>
    <property type="project" value="UniProtKB-KW"/>
</dbReference>
<dbReference type="GO" id="GO:0016491">
    <property type="term" value="F:oxidoreductase activity"/>
    <property type="evidence" value="ECO:0007669"/>
    <property type="project" value="InterPro"/>
</dbReference>
<dbReference type="Gene3D" id="3.30.70.100">
    <property type="match status" value="1"/>
</dbReference>
<dbReference type="InterPro" id="IPR011008">
    <property type="entry name" value="Dimeric_a/b-barrel"/>
</dbReference>
<dbReference type="InterPro" id="IPR009799">
    <property type="entry name" value="EthD_dom"/>
</dbReference>
<dbReference type="Pfam" id="PF07110">
    <property type="entry name" value="EthD"/>
    <property type="match status" value="1"/>
</dbReference>
<dbReference type="SUPFAM" id="SSF54909">
    <property type="entry name" value="Dimeric alpha+beta barrel"/>
    <property type="match status" value="1"/>
</dbReference>
<proteinExistence type="inferred from homology"/>
<accession>P9WEV8</accession>
<accession>C8VQ65</accession>
<accession>Q5BH29</accession>
<name>MDPH1_EMENI</name>
<comment type="function">
    <text evidence="2 4 5 6">Decarboxylase; part of the gene cluster that mediates the biosynthesis of monodictyphenone, a prenyl xanthone derivative (PubMed:20139316, PubMed:21351751, PubMed:22730213). The pathway begins with the synthesis of atrochrysone thioester by the polyketide synthase (PKS) mdpG (PubMed:20139316). The atrochrysone carboxyl ACP thioesterase mdpF then breaks the thioester bond and releases the atrochrysone carboxylic acid from mdpG (PubMed:20139316). The atrochrysone carboxylic acid is then converted to atrochrysone which is further transformed into emodin anthrone by mdpH-1 and mdpH-2 (PubMed:20139316). Emodin is further modified to yield monodictyphenone via several steps involving mdpB, mdpC mdpJ, mdpK and mdpL (PubMed:20139316, PubMed:21351751). These enzymes with xptA, xptB and xptC are also proposed to be involved in the synthesis of shamixanthone from emodin (PubMed:22730213). Especially, direct reduction of emodin by the short chain dehydrogenase mdpC followed by dehydration catalyzed by the scytalone dehydratase-like protein mdpB gives loss of oxygen and formation of chrysophanol intermediate in two simple steps (PubMed:22730213).</text>
</comment>
<comment type="catalytic activity">
    <reaction evidence="1">
        <text>atrochrysone carboxylate + H(+) = atrochrysone + CO2</text>
        <dbReference type="Rhea" id="RHEA:64264"/>
        <dbReference type="ChEBI" id="CHEBI:15378"/>
        <dbReference type="ChEBI" id="CHEBI:16526"/>
        <dbReference type="ChEBI" id="CHEBI:149713"/>
        <dbReference type="ChEBI" id="CHEBI:150016"/>
    </reaction>
    <physiologicalReaction direction="left-to-right" evidence="1">
        <dbReference type="Rhea" id="RHEA:64265"/>
    </physiologicalReaction>
</comment>
<comment type="pathway">
    <text evidence="4 5">Secondary metabolite biosynthesis.</text>
</comment>
<comment type="disruption phenotype">
    <text evidence="4 5">Impairs the production of monodictyphenone, but leads to the accumulation of endocrocin (PubMed:20139316, PubMed:21351751).</text>
</comment>
<comment type="similarity">
    <text evidence="8">Belongs to the tpcK family.</text>
</comment>
<comment type="sequence caution" evidence="8">
    <conflict type="erroneous gene model prediction">
        <sequence resource="EMBL-CDS" id="CBF90095"/>
    </conflict>
    <text>The predicted gene ANIA_10022 has been split into 2 genes: mdpH-1 and mdpH-2.</text>
</comment>
<comment type="sequence caution" evidence="8">
    <conflict type="erroneous gene model prediction">
        <sequence resource="EMBL-CDS" id="EAA66024"/>
    </conflict>
    <text>The predicted gene AN0151 has been split into 2 genes: ANIA_10022 and ANIA_10035. ANIA_10022 has been further split into mdpH-1 and mdpH-2.</text>
</comment>